<gene>
    <name evidence="1" type="primary">rpoZ</name>
    <name type="ordered locus">Shewmr7_0329</name>
</gene>
<organism>
    <name type="scientific">Shewanella sp. (strain MR-7)</name>
    <dbReference type="NCBI Taxonomy" id="60481"/>
    <lineage>
        <taxon>Bacteria</taxon>
        <taxon>Pseudomonadati</taxon>
        <taxon>Pseudomonadota</taxon>
        <taxon>Gammaproteobacteria</taxon>
        <taxon>Alteromonadales</taxon>
        <taxon>Shewanellaceae</taxon>
        <taxon>Shewanella</taxon>
    </lineage>
</organism>
<accession>Q0HZX2</accession>
<feature type="chain" id="PRO_1000006015" description="DNA-directed RNA polymerase subunit omega">
    <location>
        <begin position="1"/>
        <end position="92"/>
    </location>
</feature>
<proteinExistence type="inferred from homology"/>
<evidence type="ECO:0000255" key="1">
    <source>
        <dbReference type="HAMAP-Rule" id="MF_00366"/>
    </source>
</evidence>
<comment type="function">
    <text evidence="1">Promotes RNA polymerase assembly. Latches the N- and C-terminal regions of the beta' subunit thereby facilitating its interaction with the beta and alpha subunits.</text>
</comment>
<comment type="catalytic activity">
    <reaction evidence="1">
        <text>RNA(n) + a ribonucleoside 5'-triphosphate = RNA(n+1) + diphosphate</text>
        <dbReference type="Rhea" id="RHEA:21248"/>
        <dbReference type="Rhea" id="RHEA-COMP:14527"/>
        <dbReference type="Rhea" id="RHEA-COMP:17342"/>
        <dbReference type="ChEBI" id="CHEBI:33019"/>
        <dbReference type="ChEBI" id="CHEBI:61557"/>
        <dbReference type="ChEBI" id="CHEBI:140395"/>
        <dbReference type="EC" id="2.7.7.6"/>
    </reaction>
</comment>
<comment type="subunit">
    <text evidence="1">The RNAP catalytic core consists of 2 alpha, 1 beta, 1 beta' and 1 omega subunit. When a sigma factor is associated with the core the holoenzyme is formed, which can initiate transcription.</text>
</comment>
<comment type="similarity">
    <text evidence="1">Belongs to the RNA polymerase subunit omega family.</text>
</comment>
<protein>
    <recommendedName>
        <fullName evidence="1">DNA-directed RNA polymerase subunit omega</fullName>
        <shortName evidence="1">RNAP omega subunit</shortName>
        <ecNumber evidence="1">2.7.7.6</ecNumber>
    </recommendedName>
    <alternativeName>
        <fullName evidence="1">RNA polymerase omega subunit</fullName>
    </alternativeName>
    <alternativeName>
        <fullName evidence="1">Transcriptase subunit omega</fullName>
    </alternativeName>
</protein>
<dbReference type="EC" id="2.7.7.6" evidence="1"/>
<dbReference type="EMBL" id="CP000444">
    <property type="protein sequence ID" value="ABI41333.1"/>
    <property type="molecule type" value="Genomic_DNA"/>
</dbReference>
<dbReference type="SMR" id="Q0HZX2"/>
<dbReference type="KEGG" id="shm:Shewmr7_0329"/>
<dbReference type="HOGENOM" id="CLU_125406_5_3_6"/>
<dbReference type="GO" id="GO:0000428">
    <property type="term" value="C:DNA-directed RNA polymerase complex"/>
    <property type="evidence" value="ECO:0007669"/>
    <property type="project" value="UniProtKB-KW"/>
</dbReference>
<dbReference type="GO" id="GO:0003677">
    <property type="term" value="F:DNA binding"/>
    <property type="evidence" value="ECO:0007669"/>
    <property type="project" value="UniProtKB-UniRule"/>
</dbReference>
<dbReference type="GO" id="GO:0003899">
    <property type="term" value="F:DNA-directed RNA polymerase activity"/>
    <property type="evidence" value="ECO:0007669"/>
    <property type="project" value="UniProtKB-UniRule"/>
</dbReference>
<dbReference type="GO" id="GO:0006351">
    <property type="term" value="P:DNA-templated transcription"/>
    <property type="evidence" value="ECO:0007669"/>
    <property type="project" value="UniProtKB-UniRule"/>
</dbReference>
<dbReference type="Gene3D" id="3.90.940.10">
    <property type="match status" value="1"/>
</dbReference>
<dbReference type="HAMAP" id="MF_00366">
    <property type="entry name" value="RNApol_bact_RpoZ"/>
    <property type="match status" value="1"/>
</dbReference>
<dbReference type="InterPro" id="IPR003716">
    <property type="entry name" value="DNA-dir_RNA_pol_omega"/>
</dbReference>
<dbReference type="InterPro" id="IPR006110">
    <property type="entry name" value="Pol_omega/Rpo6/RPB6"/>
</dbReference>
<dbReference type="InterPro" id="IPR036161">
    <property type="entry name" value="RPB6/omega-like_sf"/>
</dbReference>
<dbReference type="NCBIfam" id="TIGR00690">
    <property type="entry name" value="rpoZ"/>
    <property type="match status" value="1"/>
</dbReference>
<dbReference type="PANTHER" id="PTHR34476">
    <property type="entry name" value="DNA-DIRECTED RNA POLYMERASE SUBUNIT OMEGA"/>
    <property type="match status" value="1"/>
</dbReference>
<dbReference type="PANTHER" id="PTHR34476:SF1">
    <property type="entry name" value="DNA-DIRECTED RNA POLYMERASE SUBUNIT OMEGA"/>
    <property type="match status" value="1"/>
</dbReference>
<dbReference type="Pfam" id="PF01192">
    <property type="entry name" value="RNA_pol_Rpb6"/>
    <property type="match status" value="1"/>
</dbReference>
<dbReference type="SMART" id="SM01409">
    <property type="entry name" value="RNA_pol_Rpb6"/>
    <property type="match status" value="1"/>
</dbReference>
<dbReference type="SUPFAM" id="SSF63562">
    <property type="entry name" value="RPB6/omega subunit-like"/>
    <property type="match status" value="1"/>
</dbReference>
<reference key="1">
    <citation type="submission" date="2006-08" db="EMBL/GenBank/DDBJ databases">
        <title>Complete sequence of chromosome 1 of Shewanella sp. MR-7.</title>
        <authorList>
            <person name="Copeland A."/>
            <person name="Lucas S."/>
            <person name="Lapidus A."/>
            <person name="Barry K."/>
            <person name="Detter J.C."/>
            <person name="Glavina del Rio T."/>
            <person name="Hammon N."/>
            <person name="Israni S."/>
            <person name="Dalin E."/>
            <person name="Tice H."/>
            <person name="Pitluck S."/>
            <person name="Kiss H."/>
            <person name="Brettin T."/>
            <person name="Bruce D."/>
            <person name="Han C."/>
            <person name="Tapia R."/>
            <person name="Gilna P."/>
            <person name="Schmutz J."/>
            <person name="Larimer F."/>
            <person name="Land M."/>
            <person name="Hauser L."/>
            <person name="Kyrpides N."/>
            <person name="Mikhailova N."/>
            <person name="Nealson K."/>
            <person name="Konstantinidis K."/>
            <person name="Klappenbach J."/>
            <person name="Tiedje J."/>
            <person name="Richardson P."/>
        </authorList>
    </citation>
    <scope>NUCLEOTIDE SEQUENCE [LARGE SCALE GENOMIC DNA]</scope>
    <source>
        <strain>MR-7</strain>
    </source>
</reference>
<keyword id="KW-0240">DNA-directed RNA polymerase</keyword>
<keyword id="KW-0548">Nucleotidyltransferase</keyword>
<keyword id="KW-0804">Transcription</keyword>
<keyword id="KW-0808">Transferase</keyword>
<sequence>MARVTVEDAVEQIGNRFDMILVAARRARQIAVQGKDPMVEEMNDKPTVIALREIELGLVNAHTLDADERQSVREREAAEIAAVAAIAEGRSL</sequence>
<name>RPOZ_SHESR</name>